<reference key="1">
    <citation type="submission" date="2007-06" db="EMBL/GenBank/DDBJ databases">
        <title>Complete sequence of Methanococcus maripaludis C7.</title>
        <authorList>
            <consortium name="US DOE Joint Genome Institute"/>
            <person name="Copeland A."/>
            <person name="Lucas S."/>
            <person name="Lapidus A."/>
            <person name="Barry K."/>
            <person name="Glavina del Rio T."/>
            <person name="Dalin E."/>
            <person name="Tice H."/>
            <person name="Pitluck S."/>
            <person name="Clum A."/>
            <person name="Schmutz J."/>
            <person name="Larimer F."/>
            <person name="Land M."/>
            <person name="Hauser L."/>
            <person name="Kyrpides N."/>
            <person name="Anderson I."/>
            <person name="Sieprawska-Lupa M."/>
            <person name="Whitman W.B."/>
            <person name="Richardson P."/>
        </authorList>
    </citation>
    <scope>NUCLEOTIDE SEQUENCE [LARGE SCALE GENOMIC DNA]</scope>
    <source>
        <strain>C7 / ATCC BAA-1331</strain>
    </source>
</reference>
<organism>
    <name type="scientific">Methanococcus maripaludis (strain C7 / ATCC BAA-1331)</name>
    <dbReference type="NCBI Taxonomy" id="426368"/>
    <lineage>
        <taxon>Archaea</taxon>
        <taxon>Methanobacteriati</taxon>
        <taxon>Methanobacteriota</taxon>
        <taxon>Methanomada group</taxon>
        <taxon>Methanococci</taxon>
        <taxon>Methanococcales</taxon>
        <taxon>Methanococcaceae</taxon>
        <taxon>Methanococcus</taxon>
    </lineage>
</organism>
<feature type="chain" id="PRO_1000050531" description="Ketol-acid reductoisomerase (NADP(+))">
    <location>
        <begin position="1"/>
        <end position="330"/>
    </location>
</feature>
<feature type="domain" description="KARI N-terminal Rossmann" evidence="2">
    <location>
        <begin position="1"/>
        <end position="181"/>
    </location>
</feature>
<feature type="domain" description="KARI C-terminal knotted" evidence="3">
    <location>
        <begin position="182"/>
        <end position="327"/>
    </location>
</feature>
<feature type="active site" evidence="1">
    <location>
        <position position="107"/>
    </location>
</feature>
<feature type="binding site" evidence="1">
    <location>
        <begin position="24"/>
        <end position="27"/>
    </location>
    <ligand>
        <name>NADP(+)</name>
        <dbReference type="ChEBI" id="CHEBI:58349"/>
    </ligand>
</feature>
<feature type="binding site" evidence="1">
    <location>
        <position position="47"/>
    </location>
    <ligand>
        <name>NADP(+)</name>
        <dbReference type="ChEBI" id="CHEBI:58349"/>
    </ligand>
</feature>
<feature type="binding site" evidence="1">
    <location>
        <position position="52"/>
    </location>
    <ligand>
        <name>NADP(+)</name>
        <dbReference type="ChEBI" id="CHEBI:58349"/>
    </ligand>
</feature>
<feature type="binding site" evidence="1">
    <location>
        <begin position="82"/>
        <end position="85"/>
    </location>
    <ligand>
        <name>NADP(+)</name>
        <dbReference type="ChEBI" id="CHEBI:58349"/>
    </ligand>
</feature>
<feature type="binding site" evidence="1">
    <location>
        <position position="133"/>
    </location>
    <ligand>
        <name>NADP(+)</name>
        <dbReference type="ChEBI" id="CHEBI:58349"/>
    </ligand>
</feature>
<feature type="binding site" evidence="1">
    <location>
        <position position="190"/>
    </location>
    <ligand>
        <name>Mg(2+)</name>
        <dbReference type="ChEBI" id="CHEBI:18420"/>
        <label>1</label>
    </ligand>
</feature>
<feature type="binding site" evidence="1">
    <location>
        <position position="190"/>
    </location>
    <ligand>
        <name>Mg(2+)</name>
        <dbReference type="ChEBI" id="CHEBI:18420"/>
        <label>2</label>
    </ligand>
</feature>
<feature type="binding site" evidence="1">
    <location>
        <position position="194"/>
    </location>
    <ligand>
        <name>Mg(2+)</name>
        <dbReference type="ChEBI" id="CHEBI:18420"/>
        <label>1</label>
    </ligand>
</feature>
<feature type="binding site" evidence="1">
    <location>
        <position position="226"/>
    </location>
    <ligand>
        <name>Mg(2+)</name>
        <dbReference type="ChEBI" id="CHEBI:18420"/>
        <label>2</label>
    </ligand>
</feature>
<feature type="binding site" evidence="1">
    <location>
        <position position="230"/>
    </location>
    <ligand>
        <name>Mg(2+)</name>
        <dbReference type="ChEBI" id="CHEBI:18420"/>
        <label>2</label>
    </ligand>
</feature>
<feature type="binding site" evidence="1">
    <location>
        <position position="251"/>
    </location>
    <ligand>
        <name>substrate</name>
    </ligand>
</feature>
<sequence>MKVFYDSDFKLDALKEKTIAVIGYGSQGRAQSLNMKDSGLNVVVGLRKNGASWENAKADGHNVMTIEEAAEKADIIHILIPDELQAEVYDAQIKPYLKEGKTLSFSHGFNIHYGFIVPPKGVNVVLVAPKSPGKMVRRTYEEGFGVPGLICIEIDATNNAFDIVSAMAKGIGLSRAGVIQTTFKEETETDLFGEQAVLCGGVTELIKAGFETLVEAGYAPEMAYFETCHELKLIVDLIYQKGFKNMWNDVSNTAEYGGLTRRSRIVTADSKAAMKEILKEIQDGRFTKEFVLEKQVNHAHLKAMRRLEGELQIEEVGAKLRKMCGLEKEE</sequence>
<accession>A6VJW0</accession>
<comment type="function">
    <text evidence="1">Involved in the biosynthesis of branched-chain amino acids (BCAA). Catalyzes an alkyl-migration followed by a ketol-acid reduction of (S)-2-acetolactate (S2AL) to yield (R)-2,3-dihydroxy-isovalerate. In the isomerase reaction, S2AL is rearranged via a Mg-dependent methyl migration to produce 3-hydroxy-3-methyl-2-ketobutyrate (HMKB). In the reductase reaction, this 2-ketoacid undergoes a metal-dependent reduction by NADPH to yield (R)-2,3-dihydroxy-isovalerate.</text>
</comment>
<comment type="catalytic activity">
    <reaction evidence="1">
        <text>(2R)-2,3-dihydroxy-3-methylbutanoate + NADP(+) = (2S)-2-acetolactate + NADPH + H(+)</text>
        <dbReference type="Rhea" id="RHEA:22068"/>
        <dbReference type="ChEBI" id="CHEBI:15378"/>
        <dbReference type="ChEBI" id="CHEBI:49072"/>
        <dbReference type="ChEBI" id="CHEBI:57783"/>
        <dbReference type="ChEBI" id="CHEBI:58349"/>
        <dbReference type="ChEBI" id="CHEBI:58476"/>
        <dbReference type="EC" id="1.1.1.86"/>
    </reaction>
</comment>
<comment type="catalytic activity">
    <reaction evidence="1">
        <text>(2R,3R)-2,3-dihydroxy-3-methylpentanoate + NADP(+) = (S)-2-ethyl-2-hydroxy-3-oxobutanoate + NADPH + H(+)</text>
        <dbReference type="Rhea" id="RHEA:13493"/>
        <dbReference type="ChEBI" id="CHEBI:15378"/>
        <dbReference type="ChEBI" id="CHEBI:49256"/>
        <dbReference type="ChEBI" id="CHEBI:49258"/>
        <dbReference type="ChEBI" id="CHEBI:57783"/>
        <dbReference type="ChEBI" id="CHEBI:58349"/>
        <dbReference type="EC" id="1.1.1.86"/>
    </reaction>
</comment>
<comment type="cofactor">
    <cofactor evidence="1">
        <name>Mg(2+)</name>
        <dbReference type="ChEBI" id="CHEBI:18420"/>
    </cofactor>
    <text evidence="1">Binds 2 magnesium ions per subunit.</text>
</comment>
<comment type="pathway">
    <text evidence="1">Amino-acid biosynthesis; L-isoleucine biosynthesis; L-isoleucine from 2-oxobutanoate: step 2/4.</text>
</comment>
<comment type="pathway">
    <text evidence="1">Amino-acid biosynthesis; L-valine biosynthesis; L-valine from pyruvate: step 2/4.</text>
</comment>
<comment type="similarity">
    <text evidence="1">Belongs to the ketol-acid reductoisomerase family.</text>
</comment>
<proteinExistence type="inferred from homology"/>
<gene>
    <name evidence="1" type="primary">ilvC</name>
    <name type="ordered locus">MmarC7_1680</name>
</gene>
<dbReference type="EC" id="1.1.1.86" evidence="1"/>
<dbReference type="EMBL" id="CP000745">
    <property type="protein sequence ID" value="ABR66736.1"/>
    <property type="molecule type" value="Genomic_DNA"/>
</dbReference>
<dbReference type="SMR" id="A6VJW0"/>
<dbReference type="STRING" id="426368.MmarC7_1680"/>
<dbReference type="KEGG" id="mmz:MmarC7_1680"/>
<dbReference type="eggNOG" id="arCOG04465">
    <property type="taxonomic scope" value="Archaea"/>
</dbReference>
<dbReference type="HOGENOM" id="CLU_033821_0_1_2"/>
<dbReference type="OrthoDB" id="6064at2157"/>
<dbReference type="UniPathway" id="UPA00047">
    <property type="reaction ID" value="UER00056"/>
</dbReference>
<dbReference type="UniPathway" id="UPA00049">
    <property type="reaction ID" value="UER00060"/>
</dbReference>
<dbReference type="GO" id="GO:0004455">
    <property type="term" value="F:ketol-acid reductoisomerase activity"/>
    <property type="evidence" value="ECO:0007669"/>
    <property type="project" value="UniProtKB-UniRule"/>
</dbReference>
<dbReference type="GO" id="GO:0000287">
    <property type="term" value="F:magnesium ion binding"/>
    <property type="evidence" value="ECO:0007669"/>
    <property type="project" value="UniProtKB-UniRule"/>
</dbReference>
<dbReference type="GO" id="GO:0050661">
    <property type="term" value="F:NADP binding"/>
    <property type="evidence" value="ECO:0007669"/>
    <property type="project" value="InterPro"/>
</dbReference>
<dbReference type="GO" id="GO:0009097">
    <property type="term" value="P:isoleucine biosynthetic process"/>
    <property type="evidence" value="ECO:0007669"/>
    <property type="project" value="UniProtKB-UniRule"/>
</dbReference>
<dbReference type="GO" id="GO:0009099">
    <property type="term" value="P:L-valine biosynthetic process"/>
    <property type="evidence" value="ECO:0007669"/>
    <property type="project" value="UniProtKB-UniRule"/>
</dbReference>
<dbReference type="FunFam" id="3.40.50.720:FF:000023">
    <property type="entry name" value="Ketol-acid reductoisomerase (NADP(+))"/>
    <property type="match status" value="1"/>
</dbReference>
<dbReference type="Gene3D" id="6.10.240.10">
    <property type="match status" value="1"/>
</dbReference>
<dbReference type="Gene3D" id="3.40.50.720">
    <property type="entry name" value="NAD(P)-binding Rossmann-like Domain"/>
    <property type="match status" value="1"/>
</dbReference>
<dbReference type="HAMAP" id="MF_00435">
    <property type="entry name" value="IlvC"/>
    <property type="match status" value="1"/>
</dbReference>
<dbReference type="InterPro" id="IPR008927">
    <property type="entry name" value="6-PGluconate_DH-like_C_sf"/>
</dbReference>
<dbReference type="InterPro" id="IPR013023">
    <property type="entry name" value="KARI"/>
</dbReference>
<dbReference type="InterPro" id="IPR000506">
    <property type="entry name" value="KARI_C"/>
</dbReference>
<dbReference type="InterPro" id="IPR013116">
    <property type="entry name" value="KARI_N"/>
</dbReference>
<dbReference type="InterPro" id="IPR014359">
    <property type="entry name" value="KARI_prok"/>
</dbReference>
<dbReference type="InterPro" id="IPR036291">
    <property type="entry name" value="NAD(P)-bd_dom_sf"/>
</dbReference>
<dbReference type="NCBIfam" id="TIGR00465">
    <property type="entry name" value="ilvC"/>
    <property type="match status" value="1"/>
</dbReference>
<dbReference type="NCBIfam" id="NF004017">
    <property type="entry name" value="PRK05479.1"/>
    <property type="match status" value="1"/>
</dbReference>
<dbReference type="NCBIfam" id="NF009940">
    <property type="entry name" value="PRK13403.1"/>
    <property type="match status" value="1"/>
</dbReference>
<dbReference type="PANTHER" id="PTHR21371">
    <property type="entry name" value="KETOL-ACID REDUCTOISOMERASE, MITOCHONDRIAL"/>
    <property type="match status" value="1"/>
</dbReference>
<dbReference type="PANTHER" id="PTHR21371:SF1">
    <property type="entry name" value="KETOL-ACID REDUCTOISOMERASE, MITOCHONDRIAL"/>
    <property type="match status" value="1"/>
</dbReference>
<dbReference type="Pfam" id="PF01450">
    <property type="entry name" value="KARI_C"/>
    <property type="match status" value="1"/>
</dbReference>
<dbReference type="Pfam" id="PF07991">
    <property type="entry name" value="KARI_N"/>
    <property type="match status" value="1"/>
</dbReference>
<dbReference type="PIRSF" id="PIRSF000116">
    <property type="entry name" value="IlvC_gammaproteo"/>
    <property type="match status" value="1"/>
</dbReference>
<dbReference type="SUPFAM" id="SSF48179">
    <property type="entry name" value="6-phosphogluconate dehydrogenase C-terminal domain-like"/>
    <property type="match status" value="1"/>
</dbReference>
<dbReference type="SUPFAM" id="SSF51735">
    <property type="entry name" value="NAD(P)-binding Rossmann-fold domains"/>
    <property type="match status" value="1"/>
</dbReference>
<dbReference type="PROSITE" id="PS51851">
    <property type="entry name" value="KARI_C"/>
    <property type="match status" value="1"/>
</dbReference>
<dbReference type="PROSITE" id="PS51850">
    <property type="entry name" value="KARI_N"/>
    <property type="match status" value="1"/>
</dbReference>
<keyword id="KW-0028">Amino-acid biosynthesis</keyword>
<keyword id="KW-0100">Branched-chain amino acid biosynthesis</keyword>
<keyword id="KW-0460">Magnesium</keyword>
<keyword id="KW-0479">Metal-binding</keyword>
<keyword id="KW-0521">NADP</keyword>
<keyword id="KW-0560">Oxidoreductase</keyword>
<evidence type="ECO:0000255" key="1">
    <source>
        <dbReference type="HAMAP-Rule" id="MF_00435"/>
    </source>
</evidence>
<evidence type="ECO:0000255" key="2">
    <source>
        <dbReference type="PROSITE-ProRule" id="PRU01197"/>
    </source>
</evidence>
<evidence type="ECO:0000255" key="3">
    <source>
        <dbReference type="PROSITE-ProRule" id="PRU01198"/>
    </source>
</evidence>
<name>ILVC_METM7</name>
<protein>
    <recommendedName>
        <fullName evidence="1">Ketol-acid reductoisomerase (NADP(+))</fullName>
        <shortName evidence="1">KARI</shortName>
        <ecNumber evidence="1">1.1.1.86</ecNumber>
    </recommendedName>
    <alternativeName>
        <fullName evidence="1">Acetohydroxy-acid isomeroreductase</fullName>
        <shortName evidence="1">AHIR</shortName>
    </alternativeName>
    <alternativeName>
        <fullName evidence="1">Alpha-keto-beta-hydroxylacyl reductoisomerase</fullName>
    </alternativeName>
    <alternativeName>
        <fullName evidence="1">Ketol-acid reductoisomerase type 1</fullName>
    </alternativeName>
    <alternativeName>
        <fullName evidence="1">Ketol-acid reductoisomerase type I</fullName>
    </alternativeName>
</protein>